<feature type="chain" id="PRO_1000187625" description="Membrane protein insertase YidC">
    <location>
        <begin position="1"/>
        <end position="541"/>
    </location>
</feature>
<feature type="transmembrane region" description="Helical" evidence="1">
    <location>
        <begin position="7"/>
        <end position="27"/>
    </location>
</feature>
<feature type="transmembrane region" description="Helical" evidence="1">
    <location>
        <begin position="343"/>
        <end position="363"/>
    </location>
</feature>
<feature type="transmembrane region" description="Helical" evidence="1">
    <location>
        <begin position="418"/>
        <end position="438"/>
    </location>
</feature>
<feature type="transmembrane region" description="Helical" evidence="1">
    <location>
        <begin position="456"/>
        <end position="476"/>
    </location>
</feature>
<feature type="transmembrane region" description="Helical" evidence="1">
    <location>
        <begin position="495"/>
        <end position="515"/>
    </location>
</feature>
<feature type="region of interest" description="Disordered" evidence="2">
    <location>
        <begin position="34"/>
        <end position="59"/>
    </location>
</feature>
<feature type="compositionally biased region" description="Polar residues" evidence="2">
    <location>
        <begin position="34"/>
        <end position="55"/>
    </location>
</feature>
<organism>
    <name type="scientific">Aliivibrio salmonicida (strain LFI1238)</name>
    <name type="common">Vibrio salmonicida (strain LFI1238)</name>
    <dbReference type="NCBI Taxonomy" id="316275"/>
    <lineage>
        <taxon>Bacteria</taxon>
        <taxon>Pseudomonadati</taxon>
        <taxon>Pseudomonadota</taxon>
        <taxon>Gammaproteobacteria</taxon>
        <taxon>Vibrionales</taxon>
        <taxon>Vibrionaceae</taxon>
        <taxon>Aliivibrio</taxon>
    </lineage>
</organism>
<dbReference type="EMBL" id="FM178379">
    <property type="protein sequence ID" value="CAQ77688.1"/>
    <property type="molecule type" value="Genomic_DNA"/>
</dbReference>
<dbReference type="RefSeq" id="WP_012548913.1">
    <property type="nucleotide sequence ID" value="NC_011312.1"/>
</dbReference>
<dbReference type="SMR" id="B6EP40"/>
<dbReference type="KEGG" id="vsa:VSAL_I0003"/>
<dbReference type="eggNOG" id="COG0706">
    <property type="taxonomic scope" value="Bacteria"/>
</dbReference>
<dbReference type="HOGENOM" id="CLU_016535_3_0_6"/>
<dbReference type="Proteomes" id="UP000001730">
    <property type="component" value="Chromosome 1"/>
</dbReference>
<dbReference type="GO" id="GO:0005886">
    <property type="term" value="C:plasma membrane"/>
    <property type="evidence" value="ECO:0007669"/>
    <property type="project" value="UniProtKB-SubCell"/>
</dbReference>
<dbReference type="GO" id="GO:0032977">
    <property type="term" value="F:membrane insertase activity"/>
    <property type="evidence" value="ECO:0007669"/>
    <property type="project" value="InterPro"/>
</dbReference>
<dbReference type="GO" id="GO:0051205">
    <property type="term" value="P:protein insertion into membrane"/>
    <property type="evidence" value="ECO:0007669"/>
    <property type="project" value="TreeGrafter"/>
</dbReference>
<dbReference type="GO" id="GO:0015031">
    <property type="term" value="P:protein transport"/>
    <property type="evidence" value="ECO:0007669"/>
    <property type="project" value="UniProtKB-KW"/>
</dbReference>
<dbReference type="CDD" id="cd20070">
    <property type="entry name" value="5TM_YidC_Alb3"/>
    <property type="match status" value="1"/>
</dbReference>
<dbReference type="CDD" id="cd19961">
    <property type="entry name" value="EcYidC-like_peri"/>
    <property type="match status" value="1"/>
</dbReference>
<dbReference type="Gene3D" id="2.70.98.90">
    <property type="match status" value="1"/>
</dbReference>
<dbReference type="HAMAP" id="MF_01810">
    <property type="entry name" value="YidC_type1"/>
    <property type="match status" value="1"/>
</dbReference>
<dbReference type="InterPro" id="IPR019998">
    <property type="entry name" value="Membr_insert_YidC"/>
</dbReference>
<dbReference type="InterPro" id="IPR028053">
    <property type="entry name" value="Membr_insert_YidC_N"/>
</dbReference>
<dbReference type="InterPro" id="IPR001708">
    <property type="entry name" value="YidC/ALB3/OXA1/COX18"/>
</dbReference>
<dbReference type="InterPro" id="IPR028055">
    <property type="entry name" value="YidC/Oxa/ALB_C"/>
</dbReference>
<dbReference type="InterPro" id="IPR047196">
    <property type="entry name" value="YidC_ALB_C"/>
</dbReference>
<dbReference type="InterPro" id="IPR038221">
    <property type="entry name" value="YidC_periplasmic_sf"/>
</dbReference>
<dbReference type="NCBIfam" id="NF002351">
    <property type="entry name" value="PRK01318.1-1"/>
    <property type="match status" value="1"/>
</dbReference>
<dbReference type="NCBIfam" id="NF002352">
    <property type="entry name" value="PRK01318.1-3"/>
    <property type="match status" value="1"/>
</dbReference>
<dbReference type="NCBIfam" id="TIGR03593">
    <property type="entry name" value="yidC_nterm"/>
    <property type="match status" value="1"/>
</dbReference>
<dbReference type="NCBIfam" id="TIGR03592">
    <property type="entry name" value="yidC_oxa1_cterm"/>
    <property type="match status" value="1"/>
</dbReference>
<dbReference type="PANTHER" id="PTHR12428:SF65">
    <property type="entry name" value="CYTOCHROME C OXIDASE ASSEMBLY PROTEIN COX18, MITOCHONDRIAL"/>
    <property type="match status" value="1"/>
</dbReference>
<dbReference type="PANTHER" id="PTHR12428">
    <property type="entry name" value="OXA1"/>
    <property type="match status" value="1"/>
</dbReference>
<dbReference type="Pfam" id="PF02096">
    <property type="entry name" value="60KD_IMP"/>
    <property type="match status" value="1"/>
</dbReference>
<dbReference type="Pfam" id="PF14849">
    <property type="entry name" value="YidC_periplas"/>
    <property type="match status" value="1"/>
</dbReference>
<dbReference type="PRINTS" id="PR00701">
    <property type="entry name" value="60KDINNERMP"/>
</dbReference>
<dbReference type="PRINTS" id="PR01900">
    <property type="entry name" value="YIDCPROTEIN"/>
</dbReference>
<gene>
    <name evidence="1" type="primary">yidC</name>
    <name type="ordered locus">VSAL_I0003</name>
</gene>
<proteinExistence type="inferred from homology"/>
<sequence length="541" mass="60627">MDTQRNILLLALALVSFLLFQQWQVETNPQQPATVSTVQQTHKNGDVPTSSTANSDAPVDSAQSDKLITITTDVLTLKVDTLGGDIIESVLNKYDAELDSKAKFVLLKNDADHSYIAQSGLIGPQGIDSNTGRAQFTAKKTDYVLADGQNELRIPLTLEKNGITYTKTLIVKRDSYAIDVEYTVNNQSSAPATVEMYANLKQNLLDDGGSLTMPTYRGGAYSTEDTRYKKYSFDDMEDKNLSIDMTNGQGWAGMLQHYFASAWIPRNVNDATLTTRVAGDYGYIGVRMPSVTIPAGQEDTLTATLWTGPKLQPQMAATAKYLDLSVDYGWLWFIASPLHKLLSFIQSIVGNWGLAIMILTFIVRGAMYPLTKAQYTSMAKMRMLQPKLAAMRERIGDDRQRMSQEMMELYKKEKVNPLGGCLPIVLQMPIFISLYWALMESVELRHAPFFGWITDLSAQDPYYILPLLMGASMFLIQKMSPTTVTDPMQQKIMTFIPVMFTVFFLWFPAGLVLYWLVSNVVTLIQQTLIYRALEKKGLHSK</sequence>
<reference key="1">
    <citation type="journal article" date="2008" name="BMC Genomics">
        <title>The genome sequence of the fish pathogen Aliivibrio salmonicida strain LFI1238 shows extensive evidence of gene decay.</title>
        <authorList>
            <person name="Hjerde E."/>
            <person name="Lorentzen M.S."/>
            <person name="Holden M.T."/>
            <person name="Seeger K."/>
            <person name="Paulsen S."/>
            <person name="Bason N."/>
            <person name="Churcher C."/>
            <person name="Harris D."/>
            <person name="Norbertczak H."/>
            <person name="Quail M.A."/>
            <person name="Sanders S."/>
            <person name="Thurston S."/>
            <person name="Parkhill J."/>
            <person name="Willassen N.P."/>
            <person name="Thomson N.R."/>
        </authorList>
    </citation>
    <scope>NUCLEOTIDE SEQUENCE [LARGE SCALE GENOMIC DNA]</scope>
    <source>
        <strain>LFI1238</strain>
    </source>
</reference>
<accession>B6EP40</accession>
<keyword id="KW-0997">Cell inner membrane</keyword>
<keyword id="KW-1003">Cell membrane</keyword>
<keyword id="KW-0143">Chaperone</keyword>
<keyword id="KW-0472">Membrane</keyword>
<keyword id="KW-0653">Protein transport</keyword>
<keyword id="KW-0812">Transmembrane</keyword>
<keyword id="KW-1133">Transmembrane helix</keyword>
<keyword id="KW-0813">Transport</keyword>
<name>YIDC_ALISL</name>
<protein>
    <recommendedName>
        <fullName evidence="1">Membrane protein insertase YidC</fullName>
    </recommendedName>
    <alternativeName>
        <fullName evidence="1">Foldase YidC</fullName>
    </alternativeName>
    <alternativeName>
        <fullName evidence="1">Membrane integrase YidC</fullName>
    </alternativeName>
    <alternativeName>
        <fullName evidence="1">Membrane protein YidC</fullName>
    </alternativeName>
</protein>
<comment type="function">
    <text evidence="1">Required for the insertion and/or proper folding and/or complex formation of integral membrane proteins into the membrane. Involved in integration of membrane proteins that insert both dependently and independently of the Sec translocase complex, as well as at least some lipoproteins. Aids folding of multispanning membrane proteins.</text>
</comment>
<comment type="subunit">
    <text evidence="1">Interacts with the Sec translocase complex via SecD. Specifically interacts with transmembrane segments of nascent integral membrane proteins during membrane integration.</text>
</comment>
<comment type="subcellular location">
    <subcellularLocation>
        <location evidence="1">Cell inner membrane</location>
        <topology evidence="1">Multi-pass membrane protein</topology>
    </subcellularLocation>
</comment>
<comment type="similarity">
    <text evidence="1">Belongs to the OXA1/ALB3/YidC family. Type 1 subfamily.</text>
</comment>
<evidence type="ECO:0000255" key="1">
    <source>
        <dbReference type="HAMAP-Rule" id="MF_01810"/>
    </source>
</evidence>
<evidence type="ECO:0000256" key="2">
    <source>
        <dbReference type="SAM" id="MobiDB-lite"/>
    </source>
</evidence>